<comment type="catalytic activity">
    <reaction evidence="1">
        <text>N-(5-phospho-beta-D-ribosyl)anthranilate = 1-(2-carboxyphenylamino)-1-deoxy-D-ribulose 5-phosphate</text>
        <dbReference type="Rhea" id="RHEA:21540"/>
        <dbReference type="ChEBI" id="CHEBI:18277"/>
        <dbReference type="ChEBI" id="CHEBI:58613"/>
        <dbReference type="EC" id="5.3.1.24"/>
    </reaction>
</comment>
<comment type="pathway">
    <text evidence="1">Amino-acid biosynthesis; L-tryptophan biosynthesis; L-tryptophan from chorismate: step 3/5.</text>
</comment>
<comment type="similarity">
    <text evidence="1">Belongs to the TrpF family.</text>
</comment>
<feature type="chain" id="PRO_1000018638" description="N-(5'-phosphoribosyl)anthranilate isomerase">
    <location>
        <begin position="1"/>
        <end position="213"/>
    </location>
</feature>
<reference key="1">
    <citation type="submission" date="2007-04" db="EMBL/GenBank/DDBJ databases">
        <title>Complete sequence of Roseiflexus sp. RS-1.</title>
        <authorList>
            <consortium name="US DOE Joint Genome Institute"/>
            <person name="Copeland A."/>
            <person name="Lucas S."/>
            <person name="Lapidus A."/>
            <person name="Barry K."/>
            <person name="Detter J.C."/>
            <person name="Glavina del Rio T."/>
            <person name="Hammon N."/>
            <person name="Israni S."/>
            <person name="Dalin E."/>
            <person name="Tice H."/>
            <person name="Pitluck S."/>
            <person name="Chertkov O."/>
            <person name="Brettin T."/>
            <person name="Bruce D."/>
            <person name="Han C."/>
            <person name="Schmutz J."/>
            <person name="Larimer F."/>
            <person name="Land M."/>
            <person name="Hauser L."/>
            <person name="Kyrpides N."/>
            <person name="Mikhailova N."/>
            <person name="Bryant D.A."/>
            <person name="Richardson P."/>
        </authorList>
    </citation>
    <scope>NUCLEOTIDE SEQUENCE [LARGE SCALE GENOMIC DNA]</scope>
    <source>
        <strain>RS-1</strain>
    </source>
</reference>
<name>TRPF_ROSS1</name>
<keyword id="KW-0028">Amino-acid biosynthesis</keyword>
<keyword id="KW-0057">Aromatic amino acid biosynthesis</keyword>
<keyword id="KW-0413">Isomerase</keyword>
<keyword id="KW-0822">Tryptophan biosynthesis</keyword>
<dbReference type="EC" id="5.3.1.24" evidence="1"/>
<dbReference type="EMBL" id="CP000686">
    <property type="protein sequence ID" value="ABQ91802.1"/>
    <property type="molecule type" value="Genomic_DNA"/>
</dbReference>
<dbReference type="RefSeq" id="WP_011958144.1">
    <property type="nucleotide sequence ID" value="NC_009523.1"/>
</dbReference>
<dbReference type="SMR" id="A5UYU9"/>
<dbReference type="STRING" id="357808.RoseRS_3444"/>
<dbReference type="KEGG" id="rrs:RoseRS_3444"/>
<dbReference type="eggNOG" id="COG0135">
    <property type="taxonomic scope" value="Bacteria"/>
</dbReference>
<dbReference type="HOGENOM" id="CLU_076364_1_0_0"/>
<dbReference type="OrthoDB" id="9786954at2"/>
<dbReference type="UniPathway" id="UPA00035">
    <property type="reaction ID" value="UER00042"/>
</dbReference>
<dbReference type="Proteomes" id="UP000006554">
    <property type="component" value="Chromosome"/>
</dbReference>
<dbReference type="GO" id="GO:0004640">
    <property type="term" value="F:phosphoribosylanthranilate isomerase activity"/>
    <property type="evidence" value="ECO:0007669"/>
    <property type="project" value="UniProtKB-UniRule"/>
</dbReference>
<dbReference type="GO" id="GO:0000162">
    <property type="term" value="P:L-tryptophan biosynthetic process"/>
    <property type="evidence" value="ECO:0007669"/>
    <property type="project" value="UniProtKB-UniRule"/>
</dbReference>
<dbReference type="CDD" id="cd00405">
    <property type="entry name" value="PRAI"/>
    <property type="match status" value="1"/>
</dbReference>
<dbReference type="Gene3D" id="3.20.20.70">
    <property type="entry name" value="Aldolase class I"/>
    <property type="match status" value="1"/>
</dbReference>
<dbReference type="HAMAP" id="MF_00135">
    <property type="entry name" value="PRAI"/>
    <property type="match status" value="1"/>
</dbReference>
<dbReference type="InterPro" id="IPR013785">
    <property type="entry name" value="Aldolase_TIM"/>
</dbReference>
<dbReference type="InterPro" id="IPR001240">
    <property type="entry name" value="PRAI_dom"/>
</dbReference>
<dbReference type="InterPro" id="IPR011060">
    <property type="entry name" value="RibuloseP-bd_barrel"/>
</dbReference>
<dbReference type="InterPro" id="IPR044643">
    <property type="entry name" value="TrpF_fam"/>
</dbReference>
<dbReference type="PANTHER" id="PTHR42894">
    <property type="entry name" value="N-(5'-PHOSPHORIBOSYL)ANTHRANILATE ISOMERASE"/>
    <property type="match status" value="1"/>
</dbReference>
<dbReference type="PANTHER" id="PTHR42894:SF1">
    <property type="entry name" value="N-(5'-PHOSPHORIBOSYL)ANTHRANILATE ISOMERASE"/>
    <property type="match status" value="1"/>
</dbReference>
<dbReference type="Pfam" id="PF00697">
    <property type="entry name" value="PRAI"/>
    <property type="match status" value="1"/>
</dbReference>
<dbReference type="SUPFAM" id="SSF51366">
    <property type="entry name" value="Ribulose-phoshate binding barrel"/>
    <property type="match status" value="1"/>
</dbReference>
<accession>A5UYU9</accession>
<protein>
    <recommendedName>
        <fullName evidence="1">N-(5'-phosphoribosyl)anthranilate isomerase</fullName>
        <shortName evidence="1">PRAI</shortName>
        <ecNumber evidence="1">5.3.1.24</ecNumber>
    </recommendedName>
</protein>
<gene>
    <name evidence="1" type="primary">trpF</name>
    <name type="ordered locus">RoseRS_3444</name>
</gene>
<evidence type="ECO:0000255" key="1">
    <source>
        <dbReference type="HAMAP-Rule" id="MF_00135"/>
    </source>
</evidence>
<sequence length="213" mass="22792">MINVKICGVRTRDHALTAVDAGADMIGLVFAPSRRRINPDDAAVIAAAVRTAADDRRRQVSLIGVFVNDDVTRIRKIATLCGLDGIQLSGDEPVAYAADLAPFLVIKAIRFDNSAHERDWLSEDQAHVRLLVDAHVPGSYGGAGVVADWDRAADLARRRPLLLAGGLTPANVAEAIRYVRPWGVDVSSGVESNGVKDHQKIRAFVAAARAAAQ</sequence>
<proteinExistence type="inferred from homology"/>
<organism>
    <name type="scientific">Roseiflexus sp. (strain RS-1)</name>
    <dbReference type="NCBI Taxonomy" id="357808"/>
    <lineage>
        <taxon>Bacteria</taxon>
        <taxon>Bacillati</taxon>
        <taxon>Chloroflexota</taxon>
        <taxon>Chloroflexia</taxon>
        <taxon>Chloroflexales</taxon>
        <taxon>Roseiflexineae</taxon>
        <taxon>Roseiflexaceae</taxon>
        <taxon>Roseiflexus</taxon>
    </lineage>
</organism>